<keyword id="KW-0002">3D-structure</keyword>
<keyword id="KW-0479">Metal-binding</keyword>
<keyword id="KW-0507">mRNA processing</keyword>
<keyword id="KW-0508">mRNA splicing</keyword>
<keyword id="KW-0539">Nucleus</keyword>
<keyword id="KW-1185">Reference proteome</keyword>
<keyword id="KW-0677">Repeat</keyword>
<keyword id="KW-0687">Ribonucleoprotein</keyword>
<keyword id="KW-0747">Spliceosome</keyword>
<keyword id="KW-0862">Zinc</keyword>
<keyword id="KW-0863">Zinc-finger</keyword>
<comment type="function">
    <text>Participates in pre-mRNA splicing. Part of the U4/U5/U6 tri-snRNP complex, one of the building blocks of the spliceosome.</text>
</comment>
<comment type="subunit">
    <text evidence="1 2 3">Component of the U4/U6-U5 tri-snRNP complex composed of the U4, U6 and U5 snRNAs and at least PRP3, PRP4, PRP6, PRP8, PRP18, PRP31, PRP38, SNU13, SNU23, SNU66, SNU114, SPP381, SMB1, SMD1, SMD2, SMD3, SMX2, SMX3, LSM2, LSM3, LSM4, LSM5, LSM6, LSM7, LSM8, BRR2 and DIB1.</text>
</comment>
<comment type="subcellular location">
    <subcellularLocation>
        <location evidence="4">Nucleus</location>
    </subcellularLocation>
</comment>
<comment type="miscellaneous">
    <text evidence="5">Present with 907 molecules/cell in log phase SD medium.</text>
</comment>
<name>SNU23_YEAST</name>
<dbReference type="EMBL" id="X95644">
    <property type="protein sequence ID" value="CAA64915.1"/>
    <property type="molecule type" value="Genomic_DNA"/>
</dbReference>
<dbReference type="EMBL" id="Z74146">
    <property type="protein sequence ID" value="CAA98665.1"/>
    <property type="molecule type" value="Genomic_DNA"/>
</dbReference>
<dbReference type="EMBL" id="BK006938">
    <property type="protein sequence ID" value="DAA11762.1"/>
    <property type="molecule type" value="Genomic_DNA"/>
</dbReference>
<dbReference type="PIR" id="S67640">
    <property type="entry name" value="S67640"/>
</dbReference>
<dbReference type="RefSeq" id="NP_010185.1">
    <property type="nucleotide sequence ID" value="NM_001180157.1"/>
</dbReference>
<dbReference type="PDB" id="5NRL">
    <property type="method" value="EM"/>
    <property type="resolution" value="7.20 A"/>
    <property type="chains" value="L=1-194"/>
</dbReference>
<dbReference type="PDB" id="5ZWO">
    <property type="method" value="EM"/>
    <property type="resolution" value="3.90 A"/>
    <property type="chains" value="W=1-194"/>
</dbReference>
<dbReference type="PDBsum" id="5NRL"/>
<dbReference type="PDBsum" id="5ZWO"/>
<dbReference type="EMDB" id="EMD-3683"/>
<dbReference type="EMDB" id="EMD-6974"/>
<dbReference type="SMR" id="Q12368"/>
<dbReference type="BioGRID" id="31964">
    <property type="interactions" value="233"/>
</dbReference>
<dbReference type="ComplexPortal" id="CPX-25">
    <property type="entry name" value="U4/U6.U5 tri-small nuclear ribonucleoprotein complex"/>
</dbReference>
<dbReference type="DIP" id="DIP-1647N"/>
<dbReference type="FunCoup" id="Q12368">
    <property type="interactions" value="454"/>
</dbReference>
<dbReference type="IntAct" id="Q12368">
    <property type="interactions" value="17"/>
</dbReference>
<dbReference type="MINT" id="Q12368"/>
<dbReference type="STRING" id="4932.YDL098C"/>
<dbReference type="PaxDb" id="4932-YDL098C"/>
<dbReference type="PeptideAtlas" id="Q12368"/>
<dbReference type="PRIDE" id="Q12368"/>
<dbReference type="EnsemblFungi" id="YDL098C_mRNA">
    <property type="protein sequence ID" value="YDL098C"/>
    <property type="gene ID" value="YDL098C"/>
</dbReference>
<dbReference type="GeneID" id="851460"/>
<dbReference type="KEGG" id="sce:YDL098C"/>
<dbReference type="AGR" id="SGD:S000002256"/>
<dbReference type="SGD" id="S000002256">
    <property type="gene designation" value="SNU23"/>
</dbReference>
<dbReference type="VEuPathDB" id="FungiDB:YDL098C"/>
<dbReference type="eggNOG" id="KOG4727">
    <property type="taxonomic scope" value="Eukaryota"/>
</dbReference>
<dbReference type="HOGENOM" id="CLU_067237_2_1_1"/>
<dbReference type="InParanoid" id="Q12368"/>
<dbReference type="OMA" id="HKIHQIK"/>
<dbReference type="OrthoDB" id="30343at2759"/>
<dbReference type="BioCyc" id="YEAST:G3O-29501-MONOMER"/>
<dbReference type="BioGRID-ORCS" id="851460">
    <property type="hits" value="1 hit in 10 CRISPR screens"/>
</dbReference>
<dbReference type="PRO" id="PR:Q12368"/>
<dbReference type="Proteomes" id="UP000002311">
    <property type="component" value="Chromosome IV"/>
</dbReference>
<dbReference type="RNAct" id="Q12368">
    <property type="molecule type" value="protein"/>
</dbReference>
<dbReference type="GO" id="GO:0005634">
    <property type="term" value="C:nucleus"/>
    <property type="evidence" value="ECO:0000303"/>
    <property type="project" value="ComplexPortal"/>
</dbReference>
<dbReference type="GO" id="GO:0005681">
    <property type="term" value="C:spliceosomal complex"/>
    <property type="evidence" value="ECO:0000303"/>
    <property type="project" value="ComplexPortal"/>
</dbReference>
<dbReference type="GO" id="GO:0046540">
    <property type="term" value="C:U4/U6 x U5 tri-snRNP complex"/>
    <property type="evidence" value="ECO:0000314"/>
    <property type="project" value="SGD"/>
</dbReference>
<dbReference type="GO" id="GO:0008270">
    <property type="term" value="F:zinc ion binding"/>
    <property type="evidence" value="ECO:0007669"/>
    <property type="project" value="UniProtKB-KW"/>
</dbReference>
<dbReference type="GO" id="GO:0000398">
    <property type="term" value="P:mRNA splicing, via spliceosome"/>
    <property type="evidence" value="ECO:0000315"/>
    <property type="project" value="SGD"/>
</dbReference>
<dbReference type="Gene3D" id="3.30.160.60">
    <property type="entry name" value="Classic Zinc Finger"/>
    <property type="match status" value="1"/>
</dbReference>
<dbReference type="InterPro" id="IPR040107">
    <property type="entry name" value="Snu23"/>
</dbReference>
<dbReference type="InterPro" id="IPR036236">
    <property type="entry name" value="Znf_C2H2_sf"/>
</dbReference>
<dbReference type="InterPro" id="IPR013087">
    <property type="entry name" value="Znf_C2H2_type"/>
</dbReference>
<dbReference type="PANTHER" id="PTHR45986">
    <property type="entry name" value="ZINC FINGER MATRIN-TYPE PROTEIN 2"/>
    <property type="match status" value="1"/>
</dbReference>
<dbReference type="PANTHER" id="PTHR45986:SF1">
    <property type="entry name" value="ZINC FINGER MATRIN-TYPE PROTEIN 2"/>
    <property type="match status" value="1"/>
</dbReference>
<dbReference type="Pfam" id="PF12874">
    <property type="entry name" value="zf-met"/>
    <property type="match status" value="1"/>
</dbReference>
<dbReference type="SUPFAM" id="SSF57667">
    <property type="entry name" value="beta-beta-alpha zinc fingers"/>
    <property type="match status" value="1"/>
</dbReference>
<dbReference type="PROSITE" id="PS00028">
    <property type="entry name" value="ZINC_FINGER_C2H2_1"/>
    <property type="match status" value="1"/>
</dbReference>
<sequence>MSNFGRRTWDREEYAEQARSGYDDRSLKATLTPIELQALKSKYTNYDHLIKGSLKDLNKRKLTANTESLSSFKRGKKFGFYCDICNLTFKDTLQYIDHLNHKVHAIKFENLFDEPLIIDIRDNDDVPQEEFELCYHNLIKDFVEVRSMETQSKRKRLLDTDVEKAKKVATKPSIESESKVSQMMGFSNFATSKK</sequence>
<accession>Q12368</accession>
<accession>D6VRQ2</accession>
<protein>
    <recommendedName>
        <fullName>23 kDa U4/U6.U5 small nuclear ribonucleoprotein component</fullName>
    </recommendedName>
</protein>
<feature type="chain" id="PRO_0000232633" description="23 kDa U4/U6.U5 small nuclear ribonucleoprotein component">
    <location>
        <begin position="1"/>
        <end position="194"/>
    </location>
</feature>
<feature type="zinc finger region" description="C2H2-type">
    <location>
        <begin position="80"/>
        <end position="104"/>
    </location>
</feature>
<evidence type="ECO:0000269" key="1">
    <source>
    </source>
</evidence>
<evidence type="ECO:0000269" key="2">
    <source>
    </source>
</evidence>
<evidence type="ECO:0000269" key="3">
    <source>
    </source>
</evidence>
<evidence type="ECO:0000269" key="4">
    <source>
    </source>
</evidence>
<evidence type="ECO:0000269" key="5">
    <source>
    </source>
</evidence>
<organism>
    <name type="scientific">Saccharomyces cerevisiae (strain ATCC 204508 / S288c)</name>
    <name type="common">Baker's yeast</name>
    <dbReference type="NCBI Taxonomy" id="559292"/>
    <lineage>
        <taxon>Eukaryota</taxon>
        <taxon>Fungi</taxon>
        <taxon>Dikarya</taxon>
        <taxon>Ascomycota</taxon>
        <taxon>Saccharomycotina</taxon>
        <taxon>Saccharomycetes</taxon>
        <taxon>Saccharomycetales</taxon>
        <taxon>Saccharomycetaceae</taxon>
        <taxon>Saccharomyces</taxon>
    </lineage>
</organism>
<gene>
    <name type="primary">SNU23</name>
    <name type="ordered locus">YDL098C</name>
    <name type="ORF">D2378</name>
</gene>
<reference key="1">
    <citation type="journal article" date="1996" name="Yeast">
        <title>The sequence of a 16,691 bp segment of Saccharomyces cerevisiae chromosome IV identifies the DUN1, PMT1, PMT5, SRP14 and DPR1 genes, and five new open reading frames.</title>
        <authorList>
            <person name="Boskovic J."/>
            <person name="Soler-Mira A."/>
            <person name="Garcia-Cantalejo J.M."/>
            <person name="Ballesta J.P.G."/>
            <person name="Jimenez A."/>
            <person name="Remacha M.A."/>
        </authorList>
    </citation>
    <scope>NUCLEOTIDE SEQUENCE [GENOMIC DNA]</scope>
    <source>
        <strain>ATCC 96604 / S288c / FY1679</strain>
    </source>
</reference>
<reference key="2">
    <citation type="journal article" date="1997" name="Nature">
        <title>The nucleotide sequence of Saccharomyces cerevisiae chromosome IV.</title>
        <authorList>
            <person name="Jacq C."/>
            <person name="Alt-Moerbe J."/>
            <person name="Andre B."/>
            <person name="Arnold W."/>
            <person name="Bahr A."/>
            <person name="Ballesta J.P.G."/>
            <person name="Bargues M."/>
            <person name="Baron L."/>
            <person name="Becker A."/>
            <person name="Biteau N."/>
            <person name="Bloecker H."/>
            <person name="Blugeon C."/>
            <person name="Boskovic J."/>
            <person name="Brandt P."/>
            <person name="Brueckner M."/>
            <person name="Buitrago M.J."/>
            <person name="Coster F."/>
            <person name="Delaveau T."/>
            <person name="del Rey F."/>
            <person name="Dujon B."/>
            <person name="Eide L.G."/>
            <person name="Garcia-Cantalejo J.M."/>
            <person name="Goffeau A."/>
            <person name="Gomez-Peris A."/>
            <person name="Granotier C."/>
            <person name="Hanemann V."/>
            <person name="Hankeln T."/>
            <person name="Hoheisel J.D."/>
            <person name="Jaeger W."/>
            <person name="Jimenez A."/>
            <person name="Jonniaux J.-L."/>
            <person name="Kraemer C."/>
            <person name="Kuester H."/>
            <person name="Laamanen P."/>
            <person name="Legros Y."/>
            <person name="Louis E.J."/>
            <person name="Moeller-Rieker S."/>
            <person name="Monnet A."/>
            <person name="Moro M."/>
            <person name="Mueller-Auer S."/>
            <person name="Nussbaumer B."/>
            <person name="Paricio N."/>
            <person name="Paulin L."/>
            <person name="Perea J."/>
            <person name="Perez-Alonso M."/>
            <person name="Perez-Ortin J.E."/>
            <person name="Pohl T.M."/>
            <person name="Prydz H."/>
            <person name="Purnelle B."/>
            <person name="Rasmussen S.W."/>
            <person name="Remacha M.A."/>
            <person name="Revuelta J.L."/>
            <person name="Rieger M."/>
            <person name="Salom D."/>
            <person name="Saluz H.P."/>
            <person name="Saiz J.E."/>
            <person name="Saren A.-M."/>
            <person name="Schaefer M."/>
            <person name="Scharfe M."/>
            <person name="Schmidt E.R."/>
            <person name="Schneider C."/>
            <person name="Scholler P."/>
            <person name="Schwarz S."/>
            <person name="Soler-Mira A."/>
            <person name="Urrestarazu L.A."/>
            <person name="Verhasselt P."/>
            <person name="Vissers S."/>
            <person name="Voet M."/>
            <person name="Volckaert G."/>
            <person name="Wagner G."/>
            <person name="Wambutt R."/>
            <person name="Wedler E."/>
            <person name="Wedler H."/>
            <person name="Woelfl S."/>
            <person name="Harris D.E."/>
            <person name="Bowman S."/>
            <person name="Brown D."/>
            <person name="Churcher C.M."/>
            <person name="Connor R."/>
            <person name="Dedman K."/>
            <person name="Gentles S."/>
            <person name="Hamlin N."/>
            <person name="Hunt S."/>
            <person name="Jones L."/>
            <person name="McDonald S."/>
            <person name="Murphy L.D."/>
            <person name="Niblett D."/>
            <person name="Odell C."/>
            <person name="Oliver K."/>
            <person name="Rajandream M.A."/>
            <person name="Richards C."/>
            <person name="Shore L."/>
            <person name="Walsh S.V."/>
            <person name="Barrell B.G."/>
            <person name="Dietrich F.S."/>
            <person name="Mulligan J.T."/>
            <person name="Allen E."/>
            <person name="Araujo R."/>
            <person name="Aviles E."/>
            <person name="Berno A."/>
            <person name="Carpenter J."/>
            <person name="Chen E."/>
            <person name="Cherry J.M."/>
            <person name="Chung E."/>
            <person name="Duncan M."/>
            <person name="Hunicke-Smith S."/>
            <person name="Hyman R.W."/>
            <person name="Komp C."/>
            <person name="Lashkari D."/>
            <person name="Lew H."/>
            <person name="Lin D."/>
            <person name="Mosedale D."/>
            <person name="Nakahara K."/>
            <person name="Namath A."/>
            <person name="Oefner P."/>
            <person name="Oh C."/>
            <person name="Petel F.X."/>
            <person name="Roberts D."/>
            <person name="Schramm S."/>
            <person name="Schroeder M."/>
            <person name="Shogren T."/>
            <person name="Shroff N."/>
            <person name="Winant A."/>
            <person name="Yelton M.A."/>
            <person name="Botstein D."/>
            <person name="Davis R.W."/>
            <person name="Johnston M."/>
            <person name="Andrews S."/>
            <person name="Brinkman R."/>
            <person name="Cooper J."/>
            <person name="Ding H."/>
            <person name="Du Z."/>
            <person name="Favello A."/>
            <person name="Fulton L."/>
            <person name="Gattung S."/>
            <person name="Greco T."/>
            <person name="Hallsworth K."/>
            <person name="Hawkins J."/>
            <person name="Hillier L.W."/>
            <person name="Jier M."/>
            <person name="Johnson D."/>
            <person name="Johnston L."/>
            <person name="Kirsten J."/>
            <person name="Kucaba T."/>
            <person name="Langston Y."/>
            <person name="Latreille P."/>
            <person name="Le T."/>
            <person name="Mardis E."/>
            <person name="Menezes S."/>
            <person name="Miller N."/>
            <person name="Nhan M."/>
            <person name="Pauley A."/>
            <person name="Peluso D."/>
            <person name="Rifkin L."/>
            <person name="Riles L."/>
            <person name="Taich A."/>
            <person name="Trevaskis E."/>
            <person name="Vignati D."/>
            <person name="Wilcox L."/>
            <person name="Wohldman P."/>
            <person name="Vaudin M."/>
            <person name="Wilson R."/>
            <person name="Waterston R."/>
            <person name="Albermann K."/>
            <person name="Hani J."/>
            <person name="Heumann K."/>
            <person name="Kleine K."/>
            <person name="Mewes H.-W."/>
            <person name="Zollner A."/>
            <person name="Zaccaria P."/>
        </authorList>
    </citation>
    <scope>NUCLEOTIDE SEQUENCE [LARGE SCALE GENOMIC DNA]</scope>
    <source>
        <strain>ATCC 204508 / S288c</strain>
    </source>
</reference>
<reference key="3">
    <citation type="journal article" date="2014" name="G3 (Bethesda)">
        <title>The reference genome sequence of Saccharomyces cerevisiae: Then and now.</title>
        <authorList>
            <person name="Engel S.R."/>
            <person name="Dietrich F.S."/>
            <person name="Fisk D.G."/>
            <person name="Binkley G."/>
            <person name="Balakrishnan R."/>
            <person name="Costanzo M.C."/>
            <person name="Dwight S.S."/>
            <person name="Hitz B.C."/>
            <person name="Karra K."/>
            <person name="Nash R.S."/>
            <person name="Weng S."/>
            <person name="Wong E.D."/>
            <person name="Lloyd P."/>
            <person name="Skrzypek M.S."/>
            <person name="Miyasato S.R."/>
            <person name="Simison M."/>
            <person name="Cherry J.M."/>
        </authorList>
    </citation>
    <scope>GENOME REANNOTATION</scope>
    <source>
        <strain>ATCC 204508 / S288c</strain>
    </source>
</reference>
<reference key="4">
    <citation type="journal article" date="1999" name="EMBO J.">
        <title>Identification by mass spectrometry and functional analysis of novel proteins of the yeast [U4/U6.U5] tri-snRNP.</title>
        <authorList>
            <person name="Gottschalk A."/>
            <person name="Neubauer G."/>
            <person name="Banroques J."/>
            <person name="Mann M."/>
            <person name="Luehrmann R."/>
            <person name="Fabrizio P."/>
        </authorList>
    </citation>
    <scope>SUBUNIT</scope>
    <scope>IDENTIFICATION IN THE U4/U5/U6 TRI-SNRNP COMPLEX</scope>
    <scope>IDENTIFICATION BY MASS SPECTROMETRY</scope>
</reference>
<reference key="5">
    <citation type="journal article" date="1999" name="Proc. Natl. Acad. Sci. U.S.A.">
        <title>Purification of the yeast U4/U6.U5 small nuclear ribonucleoprotein particle and identification of its proteins.</title>
        <authorList>
            <person name="Stevens S.W."/>
            <person name="Abelson J."/>
        </authorList>
    </citation>
    <scope>IDENTIFICATION IN U4/U6.U5 TRI-SNRNP COMPLEX</scope>
    <scope>IDENTIFICATION BY MASS SPECTROMETRY</scope>
</reference>
<reference key="6">
    <citation type="journal article" date="2002" name="Mol. Cell">
        <title>Composition and functional characterization of the yeast spliceosomal penta-snRNP.</title>
        <authorList>
            <person name="Stevens S.W."/>
            <person name="Ryan D.E."/>
            <person name="Ge H.Y."/>
            <person name="Moore R.E."/>
            <person name="Young M.K."/>
            <person name="Lee T.D."/>
            <person name="Abelson J."/>
        </authorList>
    </citation>
    <scope>IDENTIFICATION IN U1.U2.U4/U6.U5 PENTA-SNRNP COMPLEX</scope>
    <scope>IDENTIFICATION BY MASS SPECTROMETRY</scope>
</reference>
<reference key="7">
    <citation type="journal article" date="2003" name="Nature">
        <title>Global analysis of protein localization in budding yeast.</title>
        <authorList>
            <person name="Huh W.-K."/>
            <person name="Falvo J.V."/>
            <person name="Gerke L.C."/>
            <person name="Carroll A.S."/>
            <person name="Howson R.W."/>
            <person name="Weissman J.S."/>
            <person name="O'Shea E.K."/>
        </authorList>
    </citation>
    <scope>SUBCELLULAR LOCATION [LARGE SCALE ANALYSIS]</scope>
</reference>
<reference key="8">
    <citation type="journal article" date="2003" name="Nature">
        <title>Global analysis of protein expression in yeast.</title>
        <authorList>
            <person name="Ghaemmaghami S."/>
            <person name="Huh W.-K."/>
            <person name="Bower K."/>
            <person name="Howson R.W."/>
            <person name="Belle A."/>
            <person name="Dephoure N."/>
            <person name="O'Shea E.K."/>
            <person name="Weissman J.S."/>
        </authorList>
    </citation>
    <scope>LEVEL OF PROTEIN EXPRESSION [LARGE SCALE ANALYSIS]</scope>
</reference>
<proteinExistence type="evidence at protein level"/>